<sequence>MSKKSKKPENQICANKKARHEYFIEETFEAGLSLQGWEVKAIRAGKMTITEAYIIFRNNEAFLFGAHIQPLLSSSTHVSPDSIRTRKLLLNRREIEKLMGAVNQKGYACVPLSCYWKNSLVKCQIGLALGKKQHDKRKTLKDRDWERDKQRGFKKDLD</sequence>
<feature type="chain" id="PRO_1000002119" description="SsrA-binding protein">
    <location>
        <begin position="1"/>
        <end position="158"/>
    </location>
</feature>
<feature type="region of interest" description="Disordered" evidence="2">
    <location>
        <begin position="135"/>
        <end position="158"/>
    </location>
</feature>
<feature type="compositionally biased region" description="Basic and acidic residues" evidence="2">
    <location>
        <begin position="141"/>
        <end position="158"/>
    </location>
</feature>
<evidence type="ECO:0000255" key="1">
    <source>
        <dbReference type="HAMAP-Rule" id="MF_00023"/>
    </source>
</evidence>
<evidence type="ECO:0000256" key="2">
    <source>
        <dbReference type="SAM" id="MobiDB-lite"/>
    </source>
</evidence>
<protein>
    <recommendedName>
        <fullName evidence="1">SsrA-binding protein</fullName>
    </recommendedName>
    <alternativeName>
        <fullName evidence="1">Small protein B</fullName>
    </alternativeName>
</protein>
<proteinExistence type="inferred from homology"/>
<reference key="1">
    <citation type="submission" date="2006-03" db="EMBL/GenBank/DDBJ databases">
        <title>Complete sequence of chromosome of Psychrobacter cryohalolentis K5.</title>
        <authorList>
            <consortium name="US DOE Joint Genome Institute"/>
            <person name="Copeland A."/>
            <person name="Lucas S."/>
            <person name="Lapidus A."/>
            <person name="Barry K."/>
            <person name="Detter J.C."/>
            <person name="Glavina T."/>
            <person name="Hammon N."/>
            <person name="Israni S."/>
            <person name="Dalin E."/>
            <person name="Tice H."/>
            <person name="Pitluck S."/>
            <person name="Brettin T."/>
            <person name="Bruce D."/>
            <person name="Han C."/>
            <person name="Tapia R."/>
            <person name="Sims D.R."/>
            <person name="Gilna P."/>
            <person name="Schmutz J."/>
            <person name="Larimer F."/>
            <person name="Land M."/>
            <person name="Hauser L."/>
            <person name="Kyrpides N."/>
            <person name="Kim E."/>
            <person name="Richardson P."/>
        </authorList>
    </citation>
    <scope>NUCLEOTIDE SEQUENCE [LARGE SCALE GENOMIC DNA]</scope>
    <source>
        <strain>ATCC BAA-1226 / DSM 17306 / VKM B-2378 / K5</strain>
    </source>
</reference>
<accession>Q1QDW1</accession>
<comment type="function">
    <text evidence="1">Required for rescue of stalled ribosomes mediated by trans-translation. Binds to transfer-messenger RNA (tmRNA), required for stable association of tmRNA with ribosomes. tmRNA and SmpB together mimic tRNA shape, replacing the anticodon stem-loop with SmpB. tmRNA is encoded by the ssrA gene; the 2 termini fold to resemble tRNA(Ala) and it encodes a 'tag peptide', a short internal open reading frame. During trans-translation Ala-aminoacylated tmRNA acts like a tRNA, entering the A-site of stalled ribosomes, displacing the stalled mRNA. The ribosome then switches to translate the ORF on the tmRNA; the nascent peptide is terminated with the 'tag peptide' encoded by the tmRNA and targeted for degradation. The ribosome is freed to recommence translation, which seems to be the essential function of trans-translation.</text>
</comment>
<comment type="subcellular location">
    <subcellularLocation>
        <location evidence="1">Cytoplasm</location>
    </subcellularLocation>
    <text evidence="1">The tmRNA-SmpB complex associates with stalled 70S ribosomes.</text>
</comment>
<comment type="similarity">
    <text evidence="1">Belongs to the SmpB family.</text>
</comment>
<organism>
    <name type="scientific">Psychrobacter cryohalolentis (strain ATCC BAA-1226 / DSM 17306 / VKM B-2378 / K5)</name>
    <dbReference type="NCBI Taxonomy" id="335284"/>
    <lineage>
        <taxon>Bacteria</taxon>
        <taxon>Pseudomonadati</taxon>
        <taxon>Pseudomonadota</taxon>
        <taxon>Gammaproteobacteria</taxon>
        <taxon>Moraxellales</taxon>
        <taxon>Moraxellaceae</taxon>
        <taxon>Psychrobacter</taxon>
    </lineage>
</organism>
<keyword id="KW-0963">Cytoplasm</keyword>
<keyword id="KW-0694">RNA-binding</keyword>
<gene>
    <name evidence="1" type="primary">smpB</name>
    <name type="ordered locus">Pcryo_0358</name>
</gene>
<dbReference type="EMBL" id="CP000323">
    <property type="protein sequence ID" value="ABE74142.1"/>
    <property type="molecule type" value="Genomic_DNA"/>
</dbReference>
<dbReference type="RefSeq" id="WP_011512728.1">
    <property type="nucleotide sequence ID" value="NC_007969.1"/>
</dbReference>
<dbReference type="SMR" id="Q1QDW1"/>
<dbReference type="STRING" id="335284.Pcryo_0358"/>
<dbReference type="KEGG" id="pcr:Pcryo_0358"/>
<dbReference type="eggNOG" id="COG0691">
    <property type="taxonomic scope" value="Bacteria"/>
</dbReference>
<dbReference type="HOGENOM" id="CLU_108953_3_0_6"/>
<dbReference type="Proteomes" id="UP000002425">
    <property type="component" value="Chromosome"/>
</dbReference>
<dbReference type="GO" id="GO:0005829">
    <property type="term" value="C:cytosol"/>
    <property type="evidence" value="ECO:0007669"/>
    <property type="project" value="TreeGrafter"/>
</dbReference>
<dbReference type="GO" id="GO:0003723">
    <property type="term" value="F:RNA binding"/>
    <property type="evidence" value="ECO:0007669"/>
    <property type="project" value="UniProtKB-UniRule"/>
</dbReference>
<dbReference type="GO" id="GO:0070929">
    <property type="term" value="P:trans-translation"/>
    <property type="evidence" value="ECO:0007669"/>
    <property type="project" value="UniProtKB-UniRule"/>
</dbReference>
<dbReference type="CDD" id="cd09294">
    <property type="entry name" value="SmpB"/>
    <property type="match status" value="1"/>
</dbReference>
<dbReference type="Gene3D" id="2.40.280.10">
    <property type="match status" value="1"/>
</dbReference>
<dbReference type="HAMAP" id="MF_00023">
    <property type="entry name" value="SmpB"/>
    <property type="match status" value="1"/>
</dbReference>
<dbReference type="InterPro" id="IPR023620">
    <property type="entry name" value="SmpB"/>
</dbReference>
<dbReference type="InterPro" id="IPR000037">
    <property type="entry name" value="SsrA-bd_prot"/>
</dbReference>
<dbReference type="InterPro" id="IPR020081">
    <property type="entry name" value="SsrA-bd_prot_CS"/>
</dbReference>
<dbReference type="NCBIfam" id="NF003843">
    <property type="entry name" value="PRK05422.1"/>
    <property type="match status" value="1"/>
</dbReference>
<dbReference type="NCBIfam" id="TIGR00086">
    <property type="entry name" value="smpB"/>
    <property type="match status" value="1"/>
</dbReference>
<dbReference type="PANTHER" id="PTHR30308:SF2">
    <property type="entry name" value="SSRA-BINDING PROTEIN"/>
    <property type="match status" value="1"/>
</dbReference>
<dbReference type="PANTHER" id="PTHR30308">
    <property type="entry name" value="TMRNA-BINDING COMPONENT OF TRANS-TRANSLATION TAGGING COMPLEX"/>
    <property type="match status" value="1"/>
</dbReference>
<dbReference type="Pfam" id="PF01668">
    <property type="entry name" value="SmpB"/>
    <property type="match status" value="1"/>
</dbReference>
<dbReference type="SUPFAM" id="SSF74982">
    <property type="entry name" value="Small protein B (SmpB)"/>
    <property type="match status" value="1"/>
</dbReference>
<dbReference type="PROSITE" id="PS01317">
    <property type="entry name" value="SSRP"/>
    <property type="match status" value="1"/>
</dbReference>
<name>SSRP_PSYCK</name>